<protein>
    <recommendedName>
        <fullName evidence="1">Small ribosomal subunit protein uS7</fullName>
    </recommendedName>
    <alternativeName>
        <fullName evidence="2">30S ribosomal protein S7</fullName>
    </alternativeName>
</protein>
<accession>Q82DQ2</accession>
<proteinExistence type="inferred from homology"/>
<feature type="chain" id="PRO_0000124352" description="Small ribosomal subunit protein uS7">
    <location>
        <begin position="1"/>
        <end position="156"/>
    </location>
</feature>
<organism>
    <name type="scientific">Streptomyces avermitilis (strain ATCC 31267 / DSM 46492 / JCM 5070 / NBRC 14893 / NCIMB 12804 / NRRL 8165 / MA-4680)</name>
    <dbReference type="NCBI Taxonomy" id="227882"/>
    <lineage>
        <taxon>Bacteria</taxon>
        <taxon>Bacillati</taxon>
        <taxon>Actinomycetota</taxon>
        <taxon>Actinomycetes</taxon>
        <taxon>Kitasatosporales</taxon>
        <taxon>Streptomycetaceae</taxon>
        <taxon>Streptomyces</taxon>
    </lineage>
</organism>
<keyword id="KW-1185">Reference proteome</keyword>
<keyword id="KW-0687">Ribonucleoprotein</keyword>
<keyword id="KW-0689">Ribosomal protein</keyword>
<keyword id="KW-0694">RNA-binding</keyword>
<keyword id="KW-0699">rRNA-binding</keyword>
<keyword id="KW-0820">tRNA-binding</keyword>
<dbReference type="EMBL" id="BA000030">
    <property type="protein sequence ID" value="BAC72630.1"/>
    <property type="molecule type" value="Genomic_DNA"/>
</dbReference>
<dbReference type="RefSeq" id="WP_003992340.1">
    <property type="nucleotide sequence ID" value="NZ_JZJK01000077.1"/>
</dbReference>
<dbReference type="SMR" id="Q82DQ2"/>
<dbReference type="GeneID" id="97358149"/>
<dbReference type="KEGG" id="sma:SAVERM_4918"/>
<dbReference type="eggNOG" id="COG0049">
    <property type="taxonomic scope" value="Bacteria"/>
</dbReference>
<dbReference type="HOGENOM" id="CLU_072226_1_1_11"/>
<dbReference type="OrthoDB" id="9807653at2"/>
<dbReference type="Proteomes" id="UP000000428">
    <property type="component" value="Chromosome"/>
</dbReference>
<dbReference type="GO" id="GO:0015935">
    <property type="term" value="C:small ribosomal subunit"/>
    <property type="evidence" value="ECO:0007669"/>
    <property type="project" value="InterPro"/>
</dbReference>
<dbReference type="GO" id="GO:0019843">
    <property type="term" value="F:rRNA binding"/>
    <property type="evidence" value="ECO:0007669"/>
    <property type="project" value="UniProtKB-UniRule"/>
</dbReference>
<dbReference type="GO" id="GO:0003735">
    <property type="term" value="F:structural constituent of ribosome"/>
    <property type="evidence" value="ECO:0007669"/>
    <property type="project" value="InterPro"/>
</dbReference>
<dbReference type="GO" id="GO:0000049">
    <property type="term" value="F:tRNA binding"/>
    <property type="evidence" value="ECO:0007669"/>
    <property type="project" value="UniProtKB-UniRule"/>
</dbReference>
<dbReference type="GO" id="GO:0006412">
    <property type="term" value="P:translation"/>
    <property type="evidence" value="ECO:0007669"/>
    <property type="project" value="UniProtKB-UniRule"/>
</dbReference>
<dbReference type="CDD" id="cd14869">
    <property type="entry name" value="uS7_Bacteria"/>
    <property type="match status" value="1"/>
</dbReference>
<dbReference type="FunFam" id="1.10.455.10:FF:000001">
    <property type="entry name" value="30S ribosomal protein S7"/>
    <property type="match status" value="1"/>
</dbReference>
<dbReference type="Gene3D" id="1.10.455.10">
    <property type="entry name" value="Ribosomal protein S7 domain"/>
    <property type="match status" value="1"/>
</dbReference>
<dbReference type="HAMAP" id="MF_00480_B">
    <property type="entry name" value="Ribosomal_uS7_B"/>
    <property type="match status" value="1"/>
</dbReference>
<dbReference type="InterPro" id="IPR000235">
    <property type="entry name" value="Ribosomal_uS7"/>
</dbReference>
<dbReference type="InterPro" id="IPR005717">
    <property type="entry name" value="Ribosomal_uS7_bac/org-type"/>
</dbReference>
<dbReference type="InterPro" id="IPR020606">
    <property type="entry name" value="Ribosomal_uS7_CS"/>
</dbReference>
<dbReference type="InterPro" id="IPR023798">
    <property type="entry name" value="Ribosomal_uS7_dom"/>
</dbReference>
<dbReference type="InterPro" id="IPR036823">
    <property type="entry name" value="Ribosomal_uS7_dom_sf"/>
</dbReference>
<dbReference type="NCBIfam" id="TIGR01029">
    <property type="entry name" value="rpsG_bact"/>
    <property type="match status" value="1"/>
</dbReference>
<dbReference type="PANTHER" id="PTHR11205">
    <property type="entry name" value="RIBOSOMAL PROTEIN S7"/>
    <property type="match status" value="1"/>
</dbReference>
<dbReference type="Pfam" id="PF00177">
    <property type="entry name" value="Ribosomal_S7"/>
    <property type="match status" value="1"/>
</dbReference>
<dbReference type="PIRSF" id="PIRSF002122">
    <property type="entry name" value="RPS7p_RPS7a_RPS5e_RPS7o"/>
    <property type="match status" value="1"/>
</dbReference>
<dbReference type="SUPFAM" id="SSF47973">
    <property type="entry name" value="Ribosomal protein S7"/>
    <property type="match status" value="1"/>
</dbReference>
<dbReference type="PROSITE" id="PS00052">
    <property type="entry name" value="RIBOSOMAL_S7"/>
    <property type="match status" value="1"/>
</dbReference>
<reference key="1">
    <citation type="journal article" date="2001" name="Proc. Natl. Acad. Sci. U.S.A.">
        <title>Genome sequence of an industrial microorganism Streptomyces avermitilis: deducing the ability of producing secondary metabolites.</title>
        <authorList>
            <person name="Omura S."/>
            <person name="Ikeda H."/>
            <person name="Ishikawa J."/>
            <person name="Hanamoto A."/>
            <person name="Takahashi C."/>
            <person name="Shinose M."/>
            <person name="Takahashi Y."/>
            <person name="Horikawa H."/>
            <person name="Nakazawa H."/>
            <person name="Osonoe T."/>
            <person name="Kikuchi H."/>
            <person name="Shiba T."/>
            <person name="Sakaki Y."/>
            <person name="Hattori M."/>
        </authorList>
    </citation>
    <scope>NUCLEOTIDE SEQUENCE [LARGE SCALE GENOMIC DNA]</scope>
    <source>
        <strain>ATCC 31267 / DSM 46492 / JCM 5070 / NBRC 14893 / NCIMB 12804 / NRRL 8165 / MA-4680</strain>
    </source>
</reference>
<reference key="2">
    <citation type="journal article" date="2003" name="Nat. Biotechnol.">
        <title>Complete genome sequence and comparative analysis of the industrial microorganism Streptomyces avermitilis.</title>
        <authorList>
            <person name="Ikeda H."/>
            <person name="Ishikawa J."/>
            <person name="Hanamoto A."/>
            <person name="Shinose M."/>
            <person name="Kikuchi H."/>
            <person name="Shiba T."/>
            <person name="Sakaki Y."/>
            <person name="Hattori M."/>
            <person name="Omura S."/>
        </authorList>
    </citation>
    <scope>NUCLEOTIDE SEQUENCE [LARGE SCALE GENOMIC DNA]</scope>
    <source>
        <strain>ATCC 31267 / DSM 46492 / JCM 5070 / NBRC 14893 / NCIMB 12804 / NRRL 8165 / MA-4680</strain>
    </source>
</reference>
<name>RS7_STRAW</name>
<sequence>MPRKGPAPKRPVIIDPVYGSPLVTSLINKVLLNGKRSTAERIVYGAMEGLREKTGNDPIITLKRALENIKPTLEVKSRRVGGATYQVPIEVKPGRANTLALRWLVGYSRARREKTMTERLLNELLDASNGLGAAVKKREDTHKMAESNKAFAHYRW</sequence>
<evidence type="ECO:0000255" key="1">
    <source>
        <dbReference type="HAMAP-Rule" id="MF_00480"/>
    </source>
</evidence>
<evidence type="ECO:0000305" key="2"/>
<gene>
    <name evidence="1" type="primary">rpsG</name>
    <name type="ordered locus">SAV_4918</name>
</gene>
<comment type="function">
    <text evidence="1">One of the primary rRNA binding proteins, it binds directly to 16S rRNA where it nucleates assembly of the head domain of the 30S subunit. Is located at the subunit interface close to the decoding center, probably blocks exit of the E-site tRNA.</text>
</comment>
<comment type="subunit">
    <text evidence="1">Part of the 30S ribosomal subunit. Contacts proteins S9 and S11.</text>
</comment>
<comment type="similarity">
    <text evidence="1">Belongs to the universal ribosomal protein uS7 family.</text>
</comment>